<proteinExistence type="evidence at protein level"/>
<gene>
    <name type="primary">NPIPA7</name>
</gene>
<dbReference type="EMBL" id="AC136619">
    <property type="status" value="NOT_ANNOTATED_CDS"/>
    <property type="molecule type" value="Genomic_DNA"/>
</dbReference>
<dbReference type="EMBL" id="AC138969">
    <property type="status" value="NOT_ANNOTATED_CDS"/>
    <property type="molecule type" value="Genomic_DNA"/>
</dbReference>
<dbReference type="CCDS" id="CCDS61864.1"/>
<dbReference type="RefSeq" id="NP_001269436.1">
    <property type="nucleotide sequence ID" value="NM_001282507.2"/>
</dbReference>
<dbReference type="RefSeq" id="NP_001269440.1">
    <property type="nucleotide sequence ID" value="NM_001282511.1"/>
</dbReference>
<dbReference type="RefSeq" id="XP_016878323.1">
    <property type="nucleotide sequence ID" value="XM_017022834.1"/>
</dbReference>
<dbReference type="RefSeq" id="XP_016878324.1">
    <property type="nucleotide sequence ID" value="XM_017022835.1"/>
</dbReference>
<dbReference type="RefSeq" id="XP_016878331.1">
    <property type="nucleotide sequence ID" value="XM_017022842.1"/>
</dbReference>
<dbReference type="RefSeq" id="XP_016878332.1">
    <property type="nucleotide sequence ID" value="XM_017022843.1"/>
</dbReference>
<dbReference type="SMR" id="E9PJI5"/>
<dbReference type="FunCoup" id="E9PJI5">
    <property type="interactions" value="15"/>
</dbReference>
<dbReference type="IntAct" id="E9PJI5">
    <property type="interactions" value="2"/>
</dbReference>
<dbReference type="STRING" id="9606.ENSP00000431814"/>
<dbReference type="GlyGen" id="E9PJI5">
    <property type="glycosylation" value="1 site"/>
</dbReference>
<dbReference type="iPTMnet" id="E9PJI5"/>
<dbReference type="PhosphoSitePlus" id="E9PJI5"/>
<dbReference type="BioMuta" id="NPIPA7"/>
<dbReference type="MassIVE" id="E9PJI5"/>
<dbReference type="PaxDb" id="9606-ENSP00000431814"/>
<dbReference type="DNASU" id="101059938"/>
<dbReference type="Ensembl" id="ENST00000530217.3">
    <property type="protein sequence ID" value="ENSP00000431814.2"/>
    <property type="gene ID" value="ENSG00000214967.6"/>
</dbReference>
<dbReference type="Ensembl" id="ENST00000618131.1">
    <property type="protein sequence ID" value="ENSP00000479584.1"/>
    <property type="gene ID" value="ENSG00000277983.1"/>
</dbReference>
<dbReference type="GeneID" id="101059938"/>
<dbReference type="GeneID" id="101059953"/>
<dbReference type="KEGG" id="hsa:101059938"/>
<dbReference type="KEGG" id="hsa:101059953"/>
<dbReference type="MANE-Select" id="ENST00000530217.3">
    <property type="protein sequence ID" value="ENSP00000431814.2"/>
    <property type="RefSeq nucleotide sequence ID" value="NM_001282507.2"/>
    <property type="RefSeq protein sequence ID" value="NP_001269436.1"/>
</dbReference>
<dbReference type="AGR" id="HGNC:41982"/>
<dbReference type="AGR" id="HGNC:41983"/>
<dbReference type="CTD" id="101059938"/>
<dbReference type="CTD" id="101059953"/>
<dbReference type="GeneCards" id="NPIPA7"/>
<dbReference type="HGNC" id="HGNC:41982">
    <property type="gene designation" value="NPIPA7"/>
</dbReference>
<dbReference type="HPA" id="ENSG00000214967">
    <property type="expression patterns" value="Tissue enhanced (pituitary)"/>
</dbReference>
<dbReference type="neXtProt" id="NX_E9PJI5"/>
<dbReference type="OpenTargets" id="ENSG00000214940"/>
<dbReference type="OpenTargets" id="ENSG00000214967"/>
<dbReference type="VEuPathDB" id="HostDB:ENSG00000214967"/>
<dbReference type="eggNOG" id="ENOG502R1NR">
    <property type="taxonomic scope" value="Eukaryota"/>
</dbReference>
<dbReference type="HOGENOM" id="CLU_059939_0_0_1"/>
<dbReference type="InParanoid" id="E9PJI5"/>
<dbReference type="OrthoDB" id="9536178at2759"/>
<dbReference type="PAN-GO" id="E9PJI5">
    <property type="GO annotations" value="1 GO annotation based on evolutionary models"/>
</dbReference>
<dbReference type="PhylomeDB" id="E9PJI5"/>
<dbReference type="TreeFam" id="TF333389"/>
<dbReference type="PathwayCommons" id="E9PJI5"/>
<dbReference type="SignaLink" id="E9PJI5"/>
<dbReference type="BioGRID-ORCS" id="101059938">
    <property type="hits" value="19 hits in 524 CRISPR screens"/>
</dbReference>
<dbReference type="BioGRID-ORCS" id="101059953">
    <property type="hits" value="27 hits in 200 CRISPR screens"/>
</dbReference>
<dbReference type="Pharos" id="E9PJI5">
    <property type="development level" value="Tdark"/>
</dbReference>
<dbReference type="PRO" id="PR:E9PJI5"/>
<dbReference type="Proteomes" id="UP000005640">
    <property type="component" value="Chromosome 16"/>
</dbReference>
<dbReference type="RNAct" id="E9PJI5">
    <property type="molecule type" value="protein"/>
</dbReference>
<dbReference type="Bgee" id="ENSG00000214967">
    <property type="expression patterns" value="Expressed in adenohypophysis and 95 other cell types or tissues"/>
</dbReference>
<dbReference type="ExpressionAtlas" id="E9PJI5">
    <property type="expression patterns" value="baseline and differential"/>
</dbReference>
<dbReference type="InterPro" id="IPR009443">
    <property type="entry name" value="NPIP"/>
</dbReference>
<dbReference type="InterPro" id="IPR054697">
    <property type="entry name" value="NPIP_N"/>
</dbReference>
<dbReference type="PANTHER" id="PTHR15438">
    <property type="entry name" value="NUCLEAR PORE COMPLEX INTERACTING PROTEIN"/>
    <property type="match status" value="1"/>
</dbReference>
<dbReference type="PANTHER" id="PTHR15438:SF5">
    <property type="entry name" value="NUCLEAR PORE COMPLEX-INTERACTING PROTEIN FAMILY MEMBER A2-RELATED"/>
    <property type="match status" value="1"/>
</dbReference>
<dbReference type="Pfam" id="PF06409">
    <property type="entry name" value="NPIP"/>
    <property type="match status" value="1"/>
</dbReference>
<accession>E9PJI5</accession>
<comment type="interaction">
    <interactant intactId="EBI-10177044">
        <id>E9PJI5</id>
    </interactant>
    <interactant intactId="EBI-2549423">
        <id>Q6NT76</id>
        <label>HMBOX1</label>
    </interactant>
    <organismsDiffer>false</organismsDiffer>
    <experiments>3</experiments>
</comment>
<comment type="interaction">
    <interactant intactId="EBI-10177044">
        <id>E9PJI5</id>
    </interactant>
    <interactant intactId="EBI-3650647">
        <id>Q9BUZ4</id>
        <label>TRAF4</label>
    </interactant>
    <organismsDiffer>false</organismsDiffer>
    <experiments>3</experiments>
</comment>
<comment type="similarity">
    <text evidence="2">Belongs to the NPIP family.</text>
</comment>
<organism>
    <name type="scientific">Homo sapiens</name>
    <name type="common">Human</name>
    <dbReference type="NCBI Taxonomy" id="9606"/>
    <lineage>
        <taxon>Eukaryota</taxon>
        <taxon>Metazoa</taxon>
        <taxon>Chordata</taxon>
        <taxon>Craniata</taxon>
        <taxon>Vertebrata</taxon>
        <taxon>Euteleostomi</taxon>
        <taxon>Mammalia</taxon>
        <taxon>Eutheria</taxon>
        <taxon>Euarchontoglires</taxon>
        <taxon>Primates</taxon>
        <taxon>Haplorrhini</taxon>
        <taxon>Catarrhini</taxon>
        <taxon>Hominidae</taxon>
        <taxon>Homo</taxon>
    </lineage>
</organism>
<evidence type="ECO:0000256" key="1">
    <source>
        <dbReference type="SAM" id="MobiDB-lite"/>
    </source>
</evidence>
<evidence type="ECO:0000305" key="2"/>
<name>NPIA7_HUMAN</name>
<keyword id="KW-1185">Reference proteome</keyword>
<reference key="1">
    <citation type="journal article" date="2004" name="Nature">
        <title>The sequence and analysis of duplication-rich human chromosome 16.</title>
        <authorList>
            <person name="Martin J."/>
            <person name="Han C."/>
            <person name="Gordon L.A."/>
            <person name="Terry A."/>
            <person name="Prabhakar S."/>
            <person name="She X."/>
            <person name="Xie G."/>
            <person name="Hellsten U."/>
            <person name="Chan Y.M."/>
            <person name="Altherr M."/>
            <person name="Couronne O."/>
            <person name="Aerts A."/>
            <person name="Bajorek E."/>
            <person name="Black S."/>
            <person name="Blumer H."/>
            <person name="Branscomb E."/>
            <person name="Brown N.C."/>
            <person name="Bruno W.J."/>
            <person name="Buckingham J.M."/>
            <person name="Callen D.F."/>
            <person name="Campbell C.S."/>
            <person name="Campbell M.L."/>
            <person name="Campbell E.W."/>
            <person name="Caoile C."/>
            <person name="Challacombe J.F."/>
            <person name="Chasteen L.A."/>
            <person name="Chertkov O."/>
            <person name="Chi H.C."/>
            <person name="Christensen M."/>
            <person name="Clark L.M."/>
            <person name="Cohn J.D."/>
            <person name="Denys M."/>
            <person name="Detter J.C."/>
            <person name="Dickson M."/>
            <person name="Dimitrijevic-Bussod M."/>
            <person name="Escobar J."/>
            <person name="Fawcett J.J."/>
            <person name="Flowers D."/>
            <person name="Fotopulos D."/>
            <person name="Glavina T."/>
            <person name="Gomez M."/>
            <person name="Gonzales E."/>
            <person name="Goodstein D."/>
            <person name="Goodwin L.A."/>
            <person name="Grady D.L."/>
            <person name="Grigoriev I."/>
            <person name="Groza M."/>
            <person name="Hammon N."/>
            <person name="Hawkins T."/>
            <person name="Haydu L."/>
            <person name="Hildebrand C.E."/>
            <person name="Huang W."/>
            <person name="Israni S."/>
            <person name="Jett J."/>
            <person name="Jewett P.B."/>
            <person name="Kadner K."/>
            <person name="Kimball H."/>
            <person name="Kobayashi A."/>
            <person name="Krawczyk M.-C."/>
            <person name="Leyba T."/>
            <person name="Longmire J.L."/>
            <person name="Lopez F."/>
            <person name="Lou Y."/>
            <person name="Lowry S."/>
            <person name="Ludeman T."/>
            <person name="Manohar C.F."/>
            <person name="Mark G.A."/>
            <person name="McMurray K.L."/>
            <person name="Meincke L.J."/>
            <person name="Morgan J."/>
            <person name="Moyzis R.K."/>
            <person name="Mundt M.O."/>
            <person name="Munk A.C."/>
            <person name="Nandkeshwar R.D."/>
            <person name="Pitluck S."/>
            <person name="Pollard M."/>
            <person name="Predki P."/>
            <person name="Parson-Quintana B."/>
            <person name="Ramirez L."/>
            <person name="Rash S."/>
            <person name="Retterer J."/>
            <person name="Ricke D.O."/>
            <person name="Robinson D.L."/>
            <person name="Rodriguez A."/>
            <person name="Salamov A."/>
            <person name="Saunders E.H."/>
            <person name="Scott D."/>
            <person name="Shough T."/>
            <person name="Stallings R.L."/>
            <person name="Stalvey M."/>
            <person name="Sutherland R.D."/>
            <person name="Tapia R."/>
            <person name="Tesmer J.G."/>
            <person name="Thayer N."/>
            <person name="Thompson L.S."/>
            <person name="Tice H."/>
            <person name="Torney D.C."/>
            <person name="Tran-Gyamfi M."/>
            <person name="Tsai M."/>
            <person name="Ulanovsky L.E."/>
            <person name="Ustaszewska A."/>
            <person name="Vo N."/>
            <person name="White P.S."/>
            <person name="Williams A.L."/>
            <person name="Wills P.L."/>
            <person name="Wu J.-R."/>
            <person name="Wu K."/>
            <person name="Yang J."/>
            <person name="DeJong P."/>
            <person name="Bruce D."/>
            <person name="Doggett N.A."/>
            <person name="Deaven L."/>
            <person name="Schmutz J."/>
            <person name="Grimwood J."/>
            <person name="Richardson P."/>
            <person name="Rokhsar D.S."/>
            <person name="Eichler E.E."/>
            <person name="Gilna P."/>
            <person name="Lucas S.M."/>
            <person name="Myers R.M."/>
            <person name="Rubin E.M."/>
            <person name="Pennacchio L.A."/>
        </authorList>
    </citation>
    <scope>NUCLEOTIDE SEQUENCE [LARGE SCALE GENOMIC DNA]</scope>
</reference>
<protein>
    <recommendedName>
        <fullName>Nuclear pore complex-interacting protein family member A7</fullName>
    </recommendedName>
</protein>
<sequence length="369" mass="42230">MFCCLGYEWLSGGCTTWHSAWVINTLADHRHRGTDFGGSPWLLIITVFLRSYKFAISLCTSYLCVSFLKTIFPSQNGHDGSTDVQQRARRSNRRRQEGIKIVLEDIFTLWRQVETKVRAKIRKMKVTTKVNRHDKINGKRKTAKEHLRKLSMKEREHREEERQVSEAEENGKLDMKEIHTYMEMFQRAQALRRRAEDYYRCKITPSARKPLCNRVRMAAVEHRHSSGLPYWPYLTAETLKNRMGHQPPPPTQQHSIIDNSLSLKTPSECVLYPLPPSADDNLKTPPECLLTPLPPSALPSADDNLKTPAECLLYPLPPSADDNLKTPPECLLTPLPPSAPPSADDNLKTPPECVCSLPFHPQRMIISRN</sequence>
<feature type="chain" id="PRO_0000423925" description="Nuclear pore complex-interacting protein family member A7">
    <location>
        <begin position="1"/>
        <end position="369"/>
    </location>
</feature>
<feature type="region of interest" description="Disordered" evidence="1">
    <location>
        <begin position="151"/>
        <end position="171"/>
    </location>
</feature>